<feature type="chain" id="PRO_1000064400" description="tRNA (guanine-N(7)-)-methyltransferase">
    <location>
        <begin position="1"/>
        <end position="225"/>
    </location>
</feature>
<feature type="active site" evidence="1">
    <location>
        <position position="131"/>
    </location>
</feature>
<feature type="binding site" evidence="2">
    <location>
        <position position="56"/>
    </location>
    <ligand>
        <name>S-adenosyl-L-methionine</name>
        <dbReference type="ChEBI" id="CHEBI:59789"/>
    </ligand>
</feature>
<feature type="binding site" evidence="2">
    <location>
        <position position="81"/>
    </location>
    <ligand>
        <name>S-adenosyl-L-methionine</name>
        <dbReference type="ChEBI" id="CHEBI:59789"/>
    </ligand>
</feature>
<feature type="binding site" evidence="2">
    <location>
        <position position="108"/>
    </location>
    <ligand>
        <name>S-adenosyl-L-methionine</name>
        <dbReference type="ChEBI" id="CHEBI:59789"/>
    </ligand>
</feature>
<feature type="binding site" evidence="2">
    <location>
        <position position="131"/>
    </location>
    <ligand>
        <name>S-adenosyl-L-methionine</name>
        <dbReference type="ChEBI" id="CHEBI:59789"/>
    </ligand>
</feature>
<feature type="binding site" evidence="2">
    <location>
        <position position="135"/>
    </location>
    <ligand>
        <name>substrate</name>
    </ligand>
</feature>
<feature type="binding site" evidence="2">
    <location>
        <position position="167"/>
    </location>
    <ligand>
        <name>substrate</name>
    </ligand>
</feature>
<feature type="binding site" evidence="2">
    <location>
        <begin position="204"/>
        <end position="207"/>
    </location>
    <ligand>
        <name>substrate</name>
    </ligand>
</feature>
<name>TRMB_LEGPC</name>
<proteinExistence type="inferred from homology"/>
<organism>
    <name type="scientific">Legionella pneumophila (strain Corby)</name>
    <dbReference type="NCBI Taxonomy" id="400673"/>
    <lineage>
        <taxon>Bacteria</taxon>
        <taxon>Pseudomonadati</taxon>
        <taxon>Pseudomonadota</taxon>
        <taxon>Gammaproteobacteria</taxon>
        <taxon>Legionellales</taxon>
        <taxon>Legionellaceae</taxon>
        <taxon>Legionella</taxon>
    </lineage>
</organism>
<comment type="function">
    <text evidence="2">Catalyzes the formation of N(7)-methylguanine at position 46 (m7G46) in tRNA.</text>
</comment>
<comment type="catalytic activity">
    <reaction evidence="2">
        <text>guanosine(46) in tRNA + S-adenosyl-L-methionine = N(7)-methylguanosine(46) in tRNA + S-adenosyl-L-homocysteine</text>
        <dbReference type="Rhea" id="RHEA:42708"/>
        <dbReference type="Rhea" id="RHEA-COMP:10188"/>
        <dbReference type="Rhea" id="RHEA-COMP:10189"/>
        <dbReference type="ChEBI" id="CHEBI:57856"/>
        <dbReference type="ChEBI" id="CHEBI:59789"/>
        <dbReference type="ChEBI" id="CHEBI:74269"/>
        <dbReference type="ChEBI" id="CHEBI:74480"/>
        <dbReference type="EC" id="2.1.1.33"/>
    </reaction>
</comment>
<comment type="pathway">
    <text evidence="2">tRNA modification; N(7)-methylguanine-tRNA biosynthesis.</text>
</comment>
<comment type="similarity">
    <text evidence="2">Belongs to the class I-like SAM-binding methyltransferase superfamily. TrmB family.</text>
</comment>
<accession>A5IHB4</accession>
<reference key="1">
    <citation type="submission" date="2006-11" db="EMBL/GenBank/DDBJ databases">
        <title>Identification and characterization of a new conjugation/ type IVA secretion system (trb/tra) of L. pneumophila Corby localized on a mobile genomic island.</title>
        <authorList>
            <person name="Gloeckner G."/>
            <person name="Albert-Weissenberger C."/>
            <person name="Weinmann E."/>
            <person name="Jacobi S."/>
            <person name="Schunder E."/>
            <person name="Steinert M."/>
            <person name="Buchrieser C."/>
            <person name="Hacker J."/>
            <person name="Heuner K."/>
        </authorList>
    </citation>
    <scope>NUCLEOTIDE SEQUENCE [LARGE SCALE GENOMIC DNA]</scope>
    <source>
        <strain>Corby</strain>
    </source>
</reference>
<evidence type="ECO:0000250" key="1"/>
<evidence type="ECO:0000255" key="2">
    <source>
        <dbReference type="HAMAP-Rule" id="MF_01057"/>
    </source>
</evidence>
<protein>
    <recommendedName>
        <fullName evidence="2">tRNA (guanine-N(7)-)-methyltransferase</fullName>
        <ecNumber evidence="2">2.1.1.33</ecNumber>
    </recommendedName>
    <alternativeName>
        <fullName evidence="2">tRNA (guanine(46)-N(7))-methyltransferase</fullName>
    </alternativeName>
    <alternativeName>
        <fullName evidence="2">tRNA(m7G46)-methyltransferase</fullName>
    </alternativeName>
</protein>
<dbReference type="EC" id="2.1.1.33" evidence="2"/>
<dbReference type="EMBL" id="CP000675">
    <property type="protein sequence ID" value="ABQ56764.1"/>
    <property type="molecule type" value="Genomic_DNA"/>
</dbReference>
<dbReference type="RefSeq" id="WP_011945640.1">
    <property type="nucleotide sequence ID" value="NZ_JAPMSS010000006.1"/>
</dbReference>
<dbReference type="SMR" id="A5IHB4"/>
<dbReference type="KEGG" id="lpc:LPC_2863"/>
<dbReference type="HOGENOM" id="CLU_050910_0_1_6"/>
<dbReference type="UniPathway" id="UPA00989"/>
<dbReference type="GO" id="GO:0043527">
    <property type="term" value="C:tRNA methyltransferase complex"/>
    <property type="evidence" value="ECO:0007669"/>
    <property type="project" value="TreeGrafter"/>
</dbReference>
<dbReference type="GO" id="GO:0008176">
    <property type="term" value="F:tRNA (guanine(46)-N7)-methyltransferase activity"/>
    <property type="evidence" value="ECO:0007669"/>
    <property type="project" value="UniProtKB-UniRule"/>
</dbReference>
<dbReference type="FunFam" id="3.40.50.150:FF:000035">
    <property type="entry name" value="tRNA (guanine-N(7)-)-methyltransferase"/>
    <property type="match status" value="1"/>
</dbReference>
<dbReference type="Gene3D" id="3.40.50.150">
    <property type="entry name" value="Vaccinia Virus protein VP39"/>
    <property type="match status" value="1"/>
</dbReference>
<dbReference type="HAMAP" id="MF_01057">
    <property type="entry name" value="tRNA_methyltr_TrmB"/>
    <property type="match status" value="1"/>
</dbReference>
<dbReference type="InterPro" id="IPR029063">
    <property type="entry name" value="SAM-dependent_MTases_sf"/>
</dbReference>
<dbReference type="InterPro" id="IPR003358">
    <property type="entry name" value="tRNA_(Gua-N-7)_MeTrfase_Trmb"/>
</dbReference>
<dbReference type="InterPro" id="IPR055361">
    <property type="entry name" value="tRNA_methyltr_TrmB_bact"/>
</dbReference>
<dbReference type="NCBIfam" id="TIGR00091">
    <property type="entry name" value="tRNA (guanosine(46)-N7)-methyltransferase TrmB"/>
    <property type="match status" value="1"/>
</dbReference>
<dbReference type="PANTHER" id="PTHR23417">
    <property type="entry name" value="3-DEOXY-D-MANNO-OCTULOSONIC-ACID TRANSFERASE/TRNA GUANINE-N 7 - -METHYLTRANSFERASE"/>
    <property type="match status" value="1"/>
</dbReference>
<dbReference type="PANTHER" id="PTHR23417:SF14">
    <property type="entry name" value="PENTACOTRIPEPTIDE-REPEAT REGION OF PRORP DOMAIN-CONTAINING PROTEIN"/>
    <property type="match status" value="1"/>
</dbReference>
<dbReference type="Pfam" id="PF02390">
    <property type="entry name" value="Methyltransf_4"/>
    <property type="match status" value="1"/>
</dbReference>
<dbReference type="SUPFAM" id="SSF53335">
    <property type="entry name" value="S-adenosyl-L-methionine-dependent methyltransferases"/>
    <property type="match status" value="1"/>
</dbReference>
<dbReference type="PROSITE" id="PS51625">
    <property type="entry name" value="SAM_MT_TRMB"/>
    <property type="match status" value="1"/>
</dbReference>
<keyword id="KW-0489">Methyltransferase</keyword>
<keyword id="KW-0949">S-adenosyl-L-methionine</keyword>
<keyword id="KW-0808">Transferase</keyword>
<keyword id="KW-0819">tRNA processing</keyword>
<sequence>MQRKIKSYVLRAGRISNRQQQGLDLWLEDYELKFDSPSPWNFAKEFGRHDADTIVEIGFGMGTSLFTMAMNNPQCNYLGIEVHKAGVGSLVADLHEHQITNVRVVVHDAVDVLQTKIPENSLAGVQIFFPDPWHKKRHHKRRLIQSEFIQMLVKKIRPSGFIHCATDWEDYAEHILNVLSSESALFNQQKEGGYSPRPDSRPLTKFEQRGERLGHGVWDLVFIKK</sequence>
<gene>
    <name evidence="2" type="primary">trmB</name>
    <name type="ordered locus">LPC_2863</name>
</gene>